<dbReference type="EC" id="1.-.-.-"/>
<dbReference type="EMBL" id="AK034795">
    <property type="protein sequence ID" value="BAC28833.1"/>
    <property type="molecule type" value="mRNA"/>
</dbReference>
<dbReference type="EMBL" id="BC024586">
    <property type="protein sequence ID" value="AAH24586.1"/>
    <property type="molecule type" value="mRNA"/>
</dbReference>
<dbReference type="EMBL" id="BC025496">
    <property type="protein sequence ID" value="AAH25496.1"/>
    <property type="molecule type" value="mRNA"/>
</dbReference>
<dbReference type="EMBL" id="X95562">
    <property type="protein sequence ID" value="CAA64807.1"/>
    <property type="molecule type" value="mRNA"/>
</dbReference>
<dbReference type="CCDS" id="CCDS25472.1"/>
<dbReference type="RefSeq" id="NP_036167.1">
    <property type="nucleotide sequence ID" value="NM_012037.2"/>
</dbReference>
<dbReference type="SMR" id="Q62465"/>
<dbReference type="BioGRID" id="205084">
    <property type="interactions" value="15"/>
</dbReference>
<dbReference type="FunCoup" id="Q62465">
    <property type="interactions" value="670"/>
</dbReference>
<dbReference type="IntAct" id="Q62465">
    <property type="interactions" value="4"/>
</dbReference>
<dbReference type="STRING" id="10090.ENSMUSP00000048350"/>
<dbReference type="GlyGen" id="Q62465">
    <property type="glycosylation" value="2 sites, 1 O-linked glycan (1 site)"/>
</dbReference>
<dbReference type="iPTMnet" id="Q62465"/>
<dbReference type="PhosphoSitePlus" id="Q62465"/>
<dbReference type="SwissPalm" id="Q62465"/>
<dbReference type="jPOST" id="Q62465"/>
<dbReference type="PaxDb" id="10090-ENSMUSP00000048350"/>
<dbReference type="ProteomicsDB" id="297572"/>
<dbReference type="Pumba" id="Q62465"/>
<dbReference type="TopDownProteomics" id="Q62465"/>
<dbReference type="Antibodypedia" id="29494">
    <property type="antibodies" value="88 antibodies from 25 providers"/>
</dbReference>
<dbReference type="DNASU" id="26949"/>
<dbReference type="Ensembl" id="ENSMUST00000040430.8">
    <property type="protein sequence ID" value="ENSMUSP00000048350.8"/>
    <property type="gene ID" value="ENSMUSG00000034993.8"/>
</dbReference>
<dbReference type="GeneID" id="26949"/>
<dbReference type="KEGG" id="mmu:26949"/>
<dbReference type="UCSC" id="uc007loy.1">
    <property type="organism name" value="mouse"/>
</dbReference>
<dbReference type="AGR" id="MGI:1349450"/>
<dbReference type="CTD" id="10493"/>
<dbReference type="MGI" id="MGI:1349450">
    <property type="gene designation" value="Vat1"/>
</dbReference>
<dbReference type="VEuPathDB" id="HostDB:ENSMUSG00000034993"/>
<dbReference type="eggNOG" id="KOG1197">
    <property type="taxonomic scope" value="Eukaryota"/>
</dbReference>
<dbReference type="GeneTree" id="ENSGT00940000157579"/>
<dbReference type="HOGENOM" id="CLU_026673_3_1_1"/>
<dbReference type="InParanoid" id="Q62465"/>
<dbReference type="OMA" id="VWMPYLT"/>
<dbReference type="OrthoDB" id="203908at2759"/>
<dbReference type="PhylomeDB" id="Q62465"/>
<dbReference type="TreeFam" id="TF314255"/>
<dbReference type="Reactome" id="R-MMU-6798695">
    <property type="pathway name" value="Neutrophil degranulation"/>
</dbReference>
<dbReference type="BioGRID-ORCS" id="26949">
    <property type="hits" value="2 hits in 78 CRISPR screens"/>
</dbReference>
<dbReference type="ChiTaRS" id="Vat1">
    <property type="organism name" value="mouse"/>
</dbReference>
<dbReference type="PRO" id="PR:Q62465"/>
<dbReference type="Proteomes" id="UP000000589">
    <property type="component" value="Chromosome 11"/>
</dbReference>
<dbReference type="RNAct" id="Q62465">
    <property type="molecule type" value="protein"/>
</dbReference>
<dbReference type="Bgee" id="ENSMUSG00000034993">
    <property type="expression patterns" value="Expressed in lip and 232 other cell types or tissues"/>
</dbReference>
<dbReference type="ExpressionAtlas" id="Q62465">
    <property type="expression patterns" value="baseline and differential"/>
</dbReference>
<dbReference type="GO" id="GO:0005741">
    <property type="term" value="C:mitochondrial outer membrane"/>
    <property type="evidence" value="ECO:0000250"/>
    <property type="project" value="UniProtKB"/>
</dbReference>
<dbReference type="GO" id="GO:0016491">
    <property type="term" value="F:oxidoreductase activity"/>
    <property type="evidence" value="ECO:0007669"/>
    <property type="project" value="UniProtKB-KW"/>
</dbReference>
<dbReference type="GO" id="GO:0008270">
    <property type="term" value="F:zinc ion binding"/>
    <property type="evidence" value="ECO:0007669"/>
    <property type="project" value="InterPro"/>
</dbReference>
<dbReference type="GO" id="GO:0010637">
    <property type="term" value="P:negative regulation of mitochondrial fusion"/>
    <property type="evidence" value="ECO:0000250"/>
    <property type="project" value="UniProtKB"/>
</dbReference>
<dbReference type="CDD" id="cd08275">
    <property type="entry name" value="MDR3"/>
    <property type="match status" value="1"/>
</dbReference>
<dbReference type="FunFam" id="3.40.50.720:FF:000309">
    <property type="entry name" value="synaptic vesicle membrane protein VAT-1 homolog"/>
    <property type="match status" value="1"/>
</dbReference>
<dbReference type="Gene3D" id="3.90.180.10">
    <property type="entry name" value="Medium-chain alcohol dehydrogenases, catalytic domain"/>
    <property type="match status" value="1"/>
</dbReference>
<dbReference type="Gene3D" id="3.40.50.720">
    <property type="entry name" value="NAD(P)-binding Rossmann-like Domain"/>
    <property type="match status" value="1"/>
</dbReference>
<dbReference type="InterPro" id="IPR013154">
    <property type="entry name" value="ADH-like_N"/>
</dbReference>
<dbReference type="InterPro" id="IPR011032">
    <property type="entry name" value="GroES-like_sf"/>
</dbReference>
<dbReference type="InterPro" id="IPR036291">
    <property type="entry name" value="NAD(P)-bd_dom_sf"/>
</dbReference>
<dbReference type="InterPro" id="IPR020843">
    <property type="entry name" value="PKS_ER"/>
</dbReference>
<dbReference type="InterPro" id="IPR002364">
    <property type="entry name" value="Quin_OxRdtase/zeta-crystal_CS"/>
</dbReference>
<dbReference type="InterPro" id="IPR052100">
    <property type="entry name" value="SV-ATPase_mito-regulator"/>
</dbReference>
<dbReference type="PANTHER" id="PTHR44054:SF1">
    <property type="entry name" value="SYNAPTIC VESICLE MEMBRANE PROTEIN VAT-1 HOMOLOG"/>
    <property type="match status" value="1"/>
</dbReference>
<dbReference type="PANTHER" id="PTHR44054">
    <property type="entry name" value="SYNAPTIC VESICLE MEMBRANE PROTEIN VAT-1 HOMOLOG-LIKE"/>
    <property type="match status" value="1"/>
</dbReference>
<dbReference type="Pfam" id="PF08240">
    <property type="entry name" value="ADH_N"/>
    <property type="match status" value="1"/>
</dbReference>
<dbReference type="Pfam" id="PF13602">
    <property type="entry name" value="ADH_zinc_N_2"/>
    <property type="match status" value="1"/>
</dbReference>
<dbReference type="SMART" id="SM00829">
    <property type="entry name" value="PKS_ER"/>
    <property type="match status" value="1"/>
</dbReference>
<dbReference type="SUPFAM" id="SSF50129">
    <property type="entry name" value="GroES-like"/>
    <property type="match status" value="1"/>
</dbReference>
<dbReference type="SUPFAM" id="SSF51735">
    <property type="entry name" value="NAD(P)-binding Rossmann-fold domains"/>
    <property type="match status" value="1"/>
</dbReference>
<dbReference type="PROSITE" id="PS01162">
    <property type="entry name" value="QOR_ZETA_CRYSTAL"/>
    <property type="match status" value="1"/>
</dbReference>
<accession>Q62465</accession>
<accession>Q8R3G0</accession>
<accession>Q8R3T8</accession>
<feature type="initiator methionine" description="Removed" evidence="3">
    <location>
        <position position="1"/>
    </location>
</feature>
<feature type="chain" id="PRO_0000160919" description="Synaptic vesicle membrane protein VAT-1 homolog">
    <location>
        <begin position="2"/>
        <end position="406"/>
    </location>
</feature>
<feature type="region of interest" description="Disordered" evidence="4">
    <location>
        <begin position="1"/>
        <end position="57"/>
    </location>
</feature>
<feature type="compositionally biased region" description="Low complexity" evidence="4">
    <location>
        <begin position="9"/>
        <end position="22"/>
    </location>
</feature>
<feature type="modified residue" description="N-acetylserine" evidence="3">
    <location>
        <position position="2"/>
    </location>
</feature>
<feature type="modified residue" description="Phosphoserine" evidence="2">
    <location>
        <position position="2"/>
    </location>
</feature>
<feature type="modified residue" description="Phosphoserine" evidence="3">
    <location>
        <position position="33"/>
    </location>
</feature>
<feature type="modified residue" description="Phosphoserine" evidence="3">
    <location>
        <position position="42"/>
    </location>
</feature>
<gene>
    <name type="primary">Vat1</name>
    <name type="synonym">Vat-1</name>
</gene>
<evidence type="ECO:0000250" key="1"/>
<evidence type="ECO:0000250" key="2">
    <source>
        <dbReference type="UniProtKB" id="Q3MIE4"/>
    </source>
</evidence>
<evidence type="ECO:0000250" key="3">
    <source>
        <dbReference type="UniProtKB" id="Q99536"/>
    </source>
</evidence>
<evidence type="ECO:0000256" key="4">
    <source>
        <dbReference type="SAM" id="MobiDB-lite"/>
    </source>
</evidence>
<evidence type="ECO:0000269" key="5">
    <source>
    </source>
</evidence>
<evidence type="ECO:0000305" key="6"/>
<name>VAT1_MOUSE</name>
<comment type="function">
    <text evidence="1 5">Plays a part in calcium-regulated keratinocyte activation in epidermal repair mechanisms. Has no effect on cell proliferation (By similarity). Possesses ATPase activity. Negatively regulates mitochondrial fusion in cooperation with mitofusin proteins (MFN1-2) (By similarity).</text>
</comment>
<comment type="subcellular location">
    <subcellularLocation>
        <location>Cytoplasm</location>
    </subcellularLocation>
    <subcellularLocation>
        <location>Mitochondrion outer membrane</location>
        <topology>Peripheral membrane protein</topology>
    </subcellularLocation>
    <text evidence="1">The majority is localized in the cytoplasm a small amount is associated with mitochondria.</text>
</comment>
<comment type="similarity">
    <text evidence="6">Belongs to the zinc-containing alcohol dehydrogenase family. Quinone oxidoreductase subfamily.</text>
</comment>
<reference key="1">
    <citation type="journal article" date="2005" name="Science">
        <title>The transcriptional landscape of the mammalian genome.</title>
        <authorList>
            <person name="Carninci P."/>
            <person name="Kasukawa T."/>
            <person name="Katayama S."/>
            <person name="Gough J."/>
            <person name="Frith M.C."/>
            <person name="Maeda N."/>
            <person name="Oyama R."/>
            <person name="Ravasi T."/>
            <person name="Lenhard B."/>
            <person name="Wells C."/>
            <person name="Kodzius R."/>
            <person name="Shimokawa K."/>
            <person name="Bajic V.B."/>
            <person name="Brenner S.E."/>
            <person name="Batalov S."/>
            <person name="Forrest A.R."/>
            <person name="Zavolan M."/>
            <person name="Davis M.J."/>
            <person name="Wilming L.G."/>
            <person name="Aidinis V."/>
            <person name="Allen J.E."/>
            <person name="Ambesi-Impiombato A."/>
            <person name="Apweiler R."/>
            <person name="Aturaliya R.N."/>
            <person name="Bailey T.L."/>
            <person name="Bansal M."/>
            <person name="Baxter L."/>
            <person name="Beisel K.W."/>
            <person name="Bersano T."/>
            <person name="Bono H."/>
            <person name="Chalk A.M."/>
            <person name="Chiu K.P."/>
            <person name="Choudhary V."/>
            <person name="Christoffels A."/>
            <person name="Clutterbuck D.R."/>
            <person name="Crowe M.L."/>
            <person name="Dalla E."/>
            <person name="Dalrymple B.P."/>
            <person name="de Bono B."/>
            <person name="Della Gatta G."/>
            <person name="di Bernardo D."/>
            <person name="Down T."/>
            <person name="Engstrom P."/>
            <person name="Fagiolini M."/>
            <person name="Faulkner G."/>
            <person name="Fletcher C.F."/>
            <person name="Fukushima T."/>
            <person name="Furuno M."/>
            <person name="Futaki S."/>
            <person name="Gariboldi M."/>
            <person name="Georgii-Hemming P."/>
            <person name="Gingeras T.R."/>
            <person name="Gojobori T."/>
            <person name="Green R.E."/>
            <person name="Gustincich S."/>
            <person name="Harbers M."/>
            <person name="Hayashi Y."/>
            <person name="Hensch T.K."/>
            <person name="Hirokawa N."/>
            <person name="Hill D."/>
            <person name="Huminiecki L."/>
            <person name="Iacono M."/>
            <person name="Ikeo K."/>
            <person name="Iwama A."/>
            <person name="Ishikawa T."/>
            <person name="Jakt M."/>
            <person name="Kanapin A."/>
            <person name="Katoh M."/>
            <person name="Kawasawa Y."/>
            <person name="Kelso J."/>
            <person name="Kitamura H."/>
            <person name="Kitano H."/>
            <person name="Kollias G."/>
            <person name="Krishnan S.P."/>
            <person name="Kruger A."/>
            <person name="Kummerfeld S.K."/>
            <person name="Kurochkin I.V."/>
            <person name="Lareau L.F."/>
            <person name="Lazarevic D."/>
            <person name="Lipovich L."/>
            <person name="Liu J."/>
            <person name="Liuni S."/>
            <person name="McWilliam S."/>
            <person name="Madan Babu M."/>
            <person name="Madera M."/>
            <person name="Marchionni L."/>
            <person name="Matsuda H."/>
            <person name="Matsuzawa S."/>
            <person name="Miki H."/>
            <person name="Mignone F."/>
            <person name="Miyake S."/>
            <person name="Morris K."/>
            <person name="Mottagui-Tabar S."/>
            <person name="Mulder N."/>
            <person name="Nakano N."/>
            <person name="Nakauchi H."/>
            <person name="Ng P."/>
            <person name="Nilsson R."/>
            <person name="Nishiguchi S."/>
            <person name="Nishikawa S."/>
            <person name="Nori F."/>
            <person name="Ohara O."/>
            <person name="Okazaki Y."/>
            <person name="Orlando V."/>
            <person name="Pang K.C."/>
            <person name="Pavan W.J."/>
            <person name="Pavesi G."/>
            <person name="Pesole G."/>
            <person name="Petrovsky N."/>
            <person name="Piazza S."/>
            <person name="Reed J."/>
            <person name="Reid J.F."/>
            <person name="Ring B.Z."/>
            <person name="Ringwald M."/>
            <person name="Rost B."/>
            <person name="Ruan Y."/>
            <person name="Salzberg S.L."/>
            <person name="Sandelin A."/>
            <person name="Schneider C."/>
            <person name="Schoenbach C."/>
            <person name="Sekiguchi K."/>
            <person name="Semple C.A."/>
            <person name="Seno S."/>
            <person name="Sessa L."/>
            <person name="Sheng Y."/>
            <person name="Shibata Y."/>
            <person name="Shimada H."/>
            <person name="Shimada K."/>
            <person name="Silva D."/>
            <person name="Sinclair B."/>
            <person name="Sperling S."/>
            <person name="Stupka E."/>
            <person name="Sugiura K."/>
            <person name="Sultana R."/>
            <person name="Takenaka Y."/>
            <person name="Taki K."/>
            <person name="Tammoja K."/>
            <person name="Tan S.L."/>
            <person name="Tang S."/>
            <person name="Taylor M.S."/>
            <person name="Tegner J."/>
            <person name="Teichmann S.A."/>
            <person name="Ueda H.R."/>
            <person name="van Nimwegen E."/>
            <person name="Verardo R."/>
            <person name="Wei C.L."/>
            <person name="Yagi K."/>
            <person name="Yamanishi H."/>
            <person name="Zabarovsky E."/>
            <person name="Zhu S."/>
            <person name="Zimmer A."/>
            <person name="Hide W."/>
            <person name="Bult C."/>
            <person name="Grimmond S.M."/>
            <person name="Teasdale R.D."/>
            <person name="Liu E.T."/>
            <person name="Brusic V."/>
            <person name="Quackenbush J."/>
            <person name="Wahlestedt C."/>
            <person name="Mattick J.S."/>
            <person name="Hume D.A."/>
            <person name="Kai C."/>
            <person name="Sasaki D."/>
            <person name="Tomaru Y."/>
            <person name="Fukuda S."/>
            <person name="Kanamori-Katayama M."/>
            <person name="Suzuki M."/>
            <person name="Aoki J."/>
            <person name="Arakawa T."/>
            <person name="Iida J."/>
            <person name="Imamura K."/>
            <person name="Itoh M."/>
            <person name="Kato T."/>
            <person name="Kawaji H."/>
            <person name="Kawagashira N."/>
            <person name="Kawashima T."/>
            <person name="Kojima M."/>
            <person name="Kondo S."/>
            <person name="Konno H."/>
            <person name="Nakano K."/>
            <person name="Ninomiya N."/>
            <person name="Nishio T."/>
            <person name="Okada M."/>
            <person name="Plessy C."/>
            <person name="Shibata K."/>
            <person name="Shiraki T."/>
            <person name="Suzuki S."/>
            <person name="Tagami M."/>
            <person name="Waki K."/>
            <person name="Watahiki A."/>
            <person name="Okamura-Oho Y."/>
            <person name="Suzuki H."/>
            <person name="Kawai J."/>
            <person name="Hayashizaki Y."/>
        </authorList>
    </citation>
    <scope>NUCLEOTIDE SEQUENCE [LARGE SCALE MRNA]</scope>
    <source>
        <strain>C57BL/6J</strain>
    </source>
</reference>
<reference key="2">
    <citation type="journal article" date="2004" name="Genome Res.">
        <title>The status, quality, and expansion of the NIH full-length cDNA project: the Mammalian Gene Collection (MGC).</title>
        <authorList>
            <consortium name="The MGC Project Team"/>
        </authorList>
    </citation>
    <scope>NUCLEOTIDE SEQUENCE [LARGE SCALE MRNA]</scope>
    <source>
        <strain>Czech II</strain>
        <strain>FVB/N</strain>
        <tissue>Mammary tumor</tissue>
    </source>
</reference>
<reference key="3">
    <citation type="journal article" date="1998" name="J. Cell. Biochem.">
        <title>Mammalian protein homologous to VAT-1 of Torpedo californica: isolation from Ehrlich ascites tumor cells, biochemical characterization, and organization of its gene.</title>
        <authorList>
            <person name="Hayess K."/>
            <person name="Kraft R."/>
            <person name="Sachsinger J."/>
            <person name="Janke J."/>
            <person name="Beckmann G."/>
            <person name="Rohde K."/>
            <person name="Jandrig B."/>
            <person name="Benndorf R."/>
        </authorList>
    </citation>
    <scope>NUCLEOTIDE SEQUENCE [MRNA] OF 105-209</scope>
    <scope>PROTEIN SEQUENCE OF 239-258; 264-308; 369-378; 386-390 AND 396-404</scope>
    <scope>FUNCTION</scope>
</reference>
<reference key="4">
    <citation type="journal article" date="2010" name="Cell">
        <title>A tissue-specific atlas of mouse protein phosphorylation and expression.</title>
        <authorList>
            <person name="Huttlin E.L."/>
            <person name="Jedrychowski M.P."/>
            <person name="Elias J.E."/>
            <person name="Goswami T."/>
            <person name="Rad R."/>
            <person name="Beausoleil S.A."/>
            <person name="Villen J."/>
            <person name="Haas W."/>
            <person name="Sowa M.E."/>
            <person name="Gygi S.P."/>
        </authorList>
    </citation>
    <scope>IDENTIFICATION BY MASS SPECTROMETRY [LARGE SCALE ANALYSIS]</scope>
    <source>
        <tissue>Brain</tissue>
        <tissue>Brown adipose tissue</tissue>
        <tissue>Heart</tissue>
        <tissue>Kidney</tissue>
        <tissue>Liver</tissue>
        <tissue>Lung</tissue>
        <tissue>Pancreas</tissue>
        <tissue>Spleen</tissue>
        <tissue>Testis</tissue>
    </source>
</reference>
<organism>
    <name type="scientific">Mus musculus</name>
    <name type="common">Mouse</name>
    <dbReference type="NCBI Taxonomy" id="10090"/>
    <lineage>
        <taxon>Eukaryota</taxon>
        <taxon>Metazoa</taxon>
        <taxon>Chordata</taxon>
        <taxon>Craniata</taxon>
        <taxon>Vertebrata</taxon>
        <taxon>Euteleostomi</taxon>
        <taxon>Mammalia</taxon>
        <taxon>Eutheria</taxon>
        <taxon>Euarchontoglires</taxon>
        <taxon>Glires</taxon>
        <taxon>Rodentia</taxon>
        <taxon>Myomorpha</taxon>
        <taxon>Muroidea</taxon>
        <taxon>Muridae</taxon>
        <taxon>Murinae</taxon>
        <taxon>Mus</taxon>
        <taxon>Mus</taxon>
    </lineage>
</organism>
<keyword id="KW-0007">Acetylation</keyword>
<keyword id="KW-0963">Cytoplasm</keyword>
<keyword id="KW-0903">Direct protein sequencing</keyword>
<keyword id="KW-0472">Membrane</keyword>
<keyword id="KW-0496">Mitochondrion</keyword>
<keyword id="KW-1000">Mitochondrion outer membrane</keyword>
<keyword id="KW-0560">Oxidoreductase</keyword>
<keyword id="KW-0597">Phosphoprotein</keyword>
<keyword id="KW-1185">Reference proteome</keyword>
<proteinExistence type="evidence at protein level"/>
<protein>
    <recommendedName>
        <fullName>Synaptic vesicle membrane protein VAT-1 homolog</fullName>
        <ecNumber>1.-.-.-</ecNumber>
    </recommendedName>
</protein>
<sequence>MSAEREAAEAATVAAATEAGAETGTGAGEGAPSQPPTVEVASDPQPPPAPEASASASAPPLRCLVLTGFGGYDKVKLQSRPAVPPAPGPGQLTLRVRACGLNFADLMGRQGLYDRLPPLPVTPGMEGAGVVVAVGEGVGDRKAGDRVMVLNRSGMWQEEVTVPSAQTFLMPEAMTFEEAAALLVNYITAYMVLFDFGNLRPGHSVLVHMAAGGVGMAALQLCRTVENVTVFGTASASKHEVLKENGVTHPIDYHTTDYVDEIKKISPKGVDIVMDPLGGSDTAKGYHLLKPMGKVVTYGMANLLTGPKRNLMAMARTWWNQFSVTALQLLQANRAVCGFHLGYLDGEVELVNSVVTRLVALYNQGHIKPRIDSVWPFEKVADAMKQMQEKKNIGKVLLVPGPEKET</sequence>